<comment type="function">
    <text evidence="1">Cell wall formation.</text>
</comment>
<comment type="catalytic activity">
    <reaction evidence="1">
        <text>UDP-N-acetyl-alpha-D-muramate + NADP(+) = UDP-N-acetyl-3-O-(1-carboxyvinyl)-alpha-D-glucosamine + NADPH + H(+)</text>
        <dbReference type="Rhea" id="RHEA:12248"/>
        <dbReference type="ChEBI" id="CHEBI:15378"/>
        <dbReference type="ChEBI" id="CHEBI:57783"/>
        <dbReference type="ChEBI" id="CHEBI:58349"/>
        <dbReference type="ChEBI" id="CHEBI:68483"/>
        <dbReference type="ChEBI" id="CHEBI:70757"/>
        <dbReference type="EC" id="1.3.1.98"/>
    </reaction>
</comment>
<comment type="cofactor">
    <cofactor evidence="1">
        <name>FAD</name>
        <dbReference type="ChEBI" id="CHEBI:57692"/>
    </cofactor>
</comment>
<comment type="pathway">
    <text evidence="1">Cell wall biogenesis; peptidoglycan biosynthesis.</text>
</comment>
<comment type="subcellular location">
    <subcellularLocation>
        <location evidence="1">Cytoplasm</location>
    </subcellularLocation>
</comment>
<comment type="similarity">
    <text evidence="1">Belongs to the MurB family.</text>
</comment>
<sequence>MQTHIINFAKYSSIKIGAPLEVSLIQTPQDAISALSQNMRIIGKANNLLVSPAAQKLAMLDKHFAYLKDCGNYIEIGGAYSSGRIFSYFKSHNLAGAEFLQALPGSLGGLVKMNAGMKSYEIKQLLQAINVNGKWQDRESFPMNYRDSGIEGVILAARFHKREGFNNALQADFIALRKNHPKEPSCGSCFKNPKGDFAGRLLESVGLKGYCIGDAAFSEKHANFLINKGKATFEDALSLITLAKKRVFEASGIDLECEVQILQ</sequence>
<keyword id="KW-0131">Cell cycle</keyword>
<keyword id="KW-0132">Cell division</keyword>
<keyword id="KW-0133">Cell shape</keyword>
<keyword id="KW-0961">Cell wall biogenesis/degradation</keyword>
<keyword id="KW-0963">Cytoplasm</keyword>
<keyword id="KW-0274">FAD</keyword>
<keyword id="KW-0285">Flavoprotein</keyword>
<keyword id="KW-0521">NADP</keyword>
<keyword id="KW-0560">Oxidoreductase</keyword>
<keyword id="KW-0573">Peptidoglycan synthesis</keyword>
<keyword id="KW-1185">Reference proteome</keyword>
<evidence type="ECO:0000255" key="1">
    <source>
        <dbReference type="HAMAP-Rule" id="MF_00037"/>
    </source>
</evidence>
<dbReference type="EC" id="1.3.1.98" evidence="1"/>
<dbReference type="EMBL" id="AE017125">
    <property type="protein sequence ID" value="AAP77036.1"/>
    <property type="molecule type" value="Genomic_DNA"/>
</dbReference>
<dbReference type="RefSeq" id="WP_011115281.1">
    <property type="nucleotide sequence ID" value="NC_004917.1"/>
</dbReference>
<dbReference type="SMR" id="Q7VJ12"/>
<dbReference type="STRING" id="235279.HH_0439"/>
<dbReference type="KEGG" id="hhe:HH_0439"/>
<dbReference type="eggNOG" id="COG0812">
    <property type="taxonomic scope" value="Bacteria"/>
</dbReference>
<dbReference type="HOGENOM" id="CLU_035304_1_2_7"/>
<dbReference type="OrthoDB" id="9804753at2"/>
<dbReference type="UniPathway" id="UPA00219"/>
<dbReference type="Proteomes" id="UP000002495">
    <property type="component" value="Chromosome"/>
</dbReference>
<dbReference type="GO" id="GO:0005829">
    <property type="term" value="C:cytosol"/>
    <property type="evidence" value="ECO:0007669"/>
    <property type="project" value="TreeGrafter"/>
</dbReference>
<dbReference type="GO" id="GO:0050660">
    <property type="term" value="F:flavin adenine dinucleotide binding"/>
    <property type="evidence" value="ECO:0007669"/>
    <property type="project" value="InterPro"/>
</dbReference>
<dbReference type="GO" id="GO:0008762">
    <property type="term" value="F:UDP-N-acetylmuramate dehydrogenase activity"/>
    <property type="evidence" value="ECO:0007669"/>
    <property type="project" value="UniProtKB-UniRule"/>
</dbReference>
<dbReference type="GO" id="GO:0051301">
    <property type="term" value="P:cell division"/>
    <property type="evidence" value="ECO:0007669"/>
    <property type="project" value="UniProtKB-KW"/>
</dbReference>
<dbReference type="GO" id="GO:0071555">
    <property type="term" value="P:cell wall organization"/>
    <property type="evidence" value="ECO:0007669"/>
    <property type="project" value="UniProtKB-KW"/>
</dbReference>
<dbReference type="GO" id="GO:0009252">
    <property type="term" value="P:peptidoglycan biosynthetic process"/>
    <property type="evidence" value="ECO:0007669"/>
    <property type="project" value="UniProtKB-UniRule"/>
</dbReference>
<dbReference type="GO" id="GO:0008360">
    <property type="term" value="P:regulation of cell shape"/>
    <property type="evidence" value="ECO:0007669"/>
    <property type="project" value="UniProtKB-KW"/>
</dbReference>
<dbReference type="Gene3D" id="3.30.465.10">
    <property type="match status" value="1"/>
</dbReference>
<dbReference type="Gene3D" id="3.90.78.10">
    <property type="entry name" value="UDP-N-acetylenolpyruvoylglucosamine reductase, C-terminal domain"/>
    <property type="match status" value="1"/>
</dbReference>
<dbReference type="HAMAP" id="MF_00037">
    <property type="entry name" value="MurB"/>
    <property type="match status" value="1"/>
</dbReference>
<dbReference type="InterPro" id="IPR036318">
    <property type="entry name" value="FAD-bd_PCMH-like_sf"/>
</dbReference>
<dbReference type="InterPro" id="IPR016169">
    <property type="entry name" value="FAD-bd_PCMH_sub2"/>
</dbReference>
<dbReference type="InterPro" id="IPR003170">
    <property type="entry name" value="MurB"/>
</dbReference>
<dbReference type="InterPro" id="IPR011601">
    <property type="entry name" value="MurB_C"/>
</dbReference>
<dbReference type="InterPro" id="IPR036635">
    <property type="entry name" value="MurB_C_sf"/>
</dbReference>
<dbReference type="NCBIfam" id="TIGR00179">
    <property type="entry name" value="murB"/>
    <property type="match status" value="1"/>
</dbReference>
<dbReference type="NCBIfam" id="NF010479">
    <property type="entry name" value="PRK13904.1"/>
    <property type="match status" value="1"/>
</dbReference>
<dbReference type="PANTHER" id="PTHR21071">
    <property type="entry name" value="UDP-N-ACETYLENOLPYRUVOYLGLUCOSAMINE REDUCTASE"/>
    <property type="match status" value="1"/>
</dbReference>
<dbReference type="PANTHER" id="PTHR21071:SF4">
    <property type="entry name" value="UDP-N-ACETYLENOLPYRUVOYLGLUCOSAMINE REDUCTASE"/>
    <property type="match status" value="1"/>
</dbReference>
<dbReference type="Pfam" id="PF02873">
    <property type="entry name" value="MurB_C"/>
    <property type="match status" value="1"/>
</dbReference>
<dbReference type="SUPFAM" id="SSF56176">
    <property type="entry name" value="FAD-binding/transporter-associated domain-like"/>
    <property type="match status" value="1"/>
</dbReference>
<dbReference type="SUPFAM" id="SSF56194">
    <property type="entry name" value="Uridine diphospho-N-Acetylenolpyruvylglucosamine reductase, MurB, C-terminal domain"/>
    <property type="match status" value="1"/>
</dbReference>
<organism>
    <name type="scientific">Helicobacter hepaticus (strain ATCC 51449 / 3B1)</name>
    <dbReference type="NCBI Taxonomy" id="235279"/>
    <lineage>
        <taxon>Bacteria</taxon>
        <taxon>Pseudomonadati</taxon>
        <taxon>Campylobacterota</taxon>
        <taxon>Epsilonproteobacteria</taxon>
        <taxon>Campylobacterales</taxon>
        <taxon>Helicobacteraceae</taxon>
        <taxon>Helicobacter</taxon>
    </lineage>
</organism>
<name>MURB_HELHP</name>
<reference key="1">
    <citation type="journal article" date="2003" name="Proc. Natl. Acad. Sci. U.S.A.">
        <title>The complete genome sequence of the carcinogenic bacterium Helicobacter hepaticus.</title>
        <authorList>
            <person name="Suerbaum S."/>
            <person name="Josenhans C."/>
            <person name="Sterzenbach T."/>
            <person name="Drescher B."/>
            <person name="Brandt P."/>
            <person name="Bell M."/>
            <person name="Droege M."/>
            <person name="Fartmann B."/>
            <person name="Fischer H.-P."/>
            <person name="Ge Z."/>
            <person name="Hoerster A."/>
            <person name="Holland R."/>
            <person name="Klein K."/>
            <person name="Koenig J."/>
            <person name="Macko L."/>
            <person name="Mendz G.L."/>
            <person name="Nyakatura G."/>
            <person name="Schauer D.B."/>
            <person name="Shen Z."/>
            <person name="Weber J."/>
            <person name="Frosch M."/>
            <person name="Fox J.G."/>
        </authorList>
    </citation>
    <scope>NUCLEOTIDE SEQUENCE [LARGE SCALE GENOMIC DNA]</scope>
    <source>
        <strain>ATCC 51449 / 3B1</strain>
    </source>
</reference>
<accession>Q7VJ12</accession>
<proteinExistence type="inferred from homology"/>
<protein>
    <recommendedName>
        <fullName evidence="1">UDP-N-acetylenolpyruvoylglucosamine reductase</fullName>
        <ecNumber evidence="1">1.3.1.98</ecNumber>
    </recommendedName>
    <alternativeName>
        <fullName evidence="1">UDP-N-acetylmuramate dehydrogenase</fullName>
    </alternativeName>
</protein>
<gene>
    <name evidence="1" type="primary">murB</name>
    <name type="ordered locus">HH_0439</name>
</gene>
<feature type="chain" id="PRO_0000179217" description="UDP-N-acetylenolpyruvoylglucosamine reductase">
    <location>
        <begin position="1"/>
        <end position="263"/>
    </location>
</feature>
<feature type="active site" evidence="1">
    <location>
        <position position="146"/>
    </location>
</feature>
<feature type="active site" description="Proton donor" evidence="1">
    <location>
        <position position="188"/>
    </location>
</feature>
<feature type="active site" evidence="1">
    <location>
        <position position="258"/>
    </location>
</feature>